<reference key="1">
    <citation type="journal article" date="2009" name="PLoS Biol.">
        <title>Lineage-specific biology revealed by a finished genome assembly of the mouse.</title>
        <authorList>
            <person name="Church D.M."/>
            <person name="Goodstadt L."/>
            <person name="Hillier L.W."/>
            <person name="Zody M.C."/>
            <person name="Goldstein S."/>
            <person name="She X."/>
            <person name="Bult C.J."/>
            <person name="Agarwala R."/>
            <person name="Cherry J.L."/>
            <person name="DiCuccio M."/>
            <person name="Hlavina W."/>
            <person name="Kapustin Y."/>
            <person name="Meric P."/>
            <person name="Maglott D."/>
            <person name="Birtle Z."/>
            <person name="Marques A.C."/>
            <person name="Graves T."/>
            <person name="Zhou S."/>
            <person name="Teague B."/>
            <person name="Potamousis K."/>
            <person name="Churas C."/>
            <person name="Place M."/>
            <person name="Herschleb J."/>
            <person name="Runnheim R."/>
            <person name="Forrest D."/>
            <person name="Amos-Landgraf J."/>
            <person name="Schwartz D.C."/>
            <person name="Cheng Z."/>
            <person name="Lindblad-Toh K."/>
            <person name="Eichler E.E."/>
            <person name="Ponting C.P."/>
        </authorList>
    </citation>
    <scope>NUCLEOTIDE SEQUENCE [LARGE SCALE GENOMIC DNA]</scope>
    <source>
        <strain>C57BL/6J</strain>
    </source>
</reference>
<reference key="2">
    <citation type="journal article" date="2003" name="J. Biol. Chem.">
        <title>Characterization of human thioredoxin-like 2. A novel microtubule-binding thioredoxin expressed predominantly in the cilia of lung airway epithelium and spermatid manchette and axoneme.</title>
        <authorList>
            <person name="Sadek C.M."/>
            <person name="Jimenez A."/>
            <person name="Damdimopoulos A.E."/>
            <person name="Kieselbach T."/>
            <person name="Nord M."/>
            <person name="Gustafsson J.-A."/>
            <person name="Spyrou G."/>
            <person name="Davis E.C."/>
            <person name="Oko R."/>
            <person name="van der Hoorn F.A."/>
            <person name="Miranda-Vizuete A."/>
        </authorList>
    </citation>
    <scope>SUBCELLULAR LOCATION</scope>
    <scope>TISSUE SPECIFICITY</scope>
    <source>
        <tissue>Testis</tissue>
    </source>
</reference>
<comment type="function">
    <text evidence="2">May be a regulator of microtubule physiology.</text>
</comment>
<comment type="subunit">
    <text evidence="2">Monomer and homodimer.</text>
</comment>
<comment type="subcellular location">
    <subcellularLocation>
        <location evidence="4">Cytoplasm</location>
        <location evidence="4">Cytoskeleton</location>
        <location evidence="4">Cilium axoneme</location>
    </subcellularLocation>
    <subcellularLocation>
        <location evidence="1">Dynein axonemal particle</location>
    </subcellularLocation>
    <text evidence="4">Associated with microtubules. Detected in cilia of lung epithelium, and associated with the spermatid tail and manchette.</text>
</comment>
<comment type="tissue specificity">
    <text evidence="4">Expressed in lung airway epithelium (at protein level).</text>
</comment>
<comment type="similarity">
    <text evidence="5">Belongs to the NDK family.</text>
</comment>
<evidence type="ECO:0000250" key="1">
    <source>
        <dbReference type="UniProtKB" id="Q6IRC5"/>
    </source>
</evidence>
<evidence type="ECO:0000250" key="2">
    <source>
        <dbReference type="UniProtKB" id="Q86XW9"/>
    </source>
</evidence>
<evidence type="ECO:0000256" key="3">
    <source>
        <dbReference type="SAM" id="MobiDB-lite"/>
    </source>
</evidence>
<evidence type="ECO:0000269" key="4">
    <source>
    </source>
</evidence>
<evidence type="ECO:0000305" key="5"/>
<evidence type="ECO:0000312" key="6">
    <source>
        <dbReference type="MGI" id="MGI:4359686"/>
    </source>
</evidence>
<proteinExistence type="evidence at protein level"/>
<accession>A0A1L1SUL6</accession>
<dbReference type="EMBL" id="AC157994">
    <property type="status" value="NOT_ANNOTATED_CDS"/>
    <property type="molecule type" value="Genomic_DNA"/>
</dbReference>
<dbReference type="RefSeq" id="NP_001423151.1">
    <property type="nucleotide sequence ID" value="NM_001436222.1"/>
</dbReference>
<dbReference type="SMR" id="A0A1L1SUL6"/>
<dbReference type="STRING" id="10090.ENSMUSP00000150820"/>
<dbReference type="PhosphoSitePlus" id="A0A1L1SUL6"/>
<dbReference type="ProteomicsDB" id="358974"/>
<dbReference type="Antibodypedia" id="33430">
    <property type="antibodies" value="125 antibodies from 23 providers"/>
</dbReference>
<dbReference type="Ensembl" id="ENSMUST00000163199.5">
    <property type="protein sequence ID" value="ENSMUSP00000150820.2"/>
    <property type="gene ID" value="ENSMUSG00000046242.9"/>
</dbReference>
<dbReference type="GeneID" id="623534"/>
<dbReference type="AGR" id="MGI:4359686"/>
<dbReference type="MGI" id="MGI:4359686">
    <property type="gene designation" value="Nme9"/>
</dbReference>
<dbReference type="VEuPathDB" id="HostDB:ENSMUSG00000046242"/>
<dbReference type="GeneTree" id="ENSGT00940000162486"/>
<dbReference type="InParanoid" id="A0A1L1SUL6"/>
<dbReference type="OMA" id="PCDPHVA"/>
<dbReference type="OrthoDB" id="10263751at2759"/>
<dbReference type="ChiTaRS" id="Nme9">
    <property type="organism name" value="mouse"/>
</dbReference>
<dbReference type="PRO" id="PR:A0A1L1SUL6"/>
<dbReference type="Proteomes" id="UP000000589">
    <property type="component" value="Chromosome 9"/>
</dbReference>
<dbReference type="RNAct" id="A0A1L1SUL6">
    <property type="molecule type" value="protein"/>
</dbReference>
<dbReference type="Bgee" id="ENSMUSG00000046242">
    <property type="expression patterns" value="Expressed in otolith organ and 31 other cell types or tissues"/>
</dbReference>
<dbReference type="GO" id="GO:0042995">
    <property type="term" value="C:cell projection"/>
    <property type="evidence" value="ECO:0007669"/>
    <property type="project" value="UniProtKB-KW"/>
</dbReference>
<dbReference type="GO" id="GO:0005856">
    <property type="term" value="C:cytoskeleton"/>
    <property type="evidence" value="ECO:0007669"/>
    <property type="project" value="UniProtKB-KW"/>
</dbReference>
<dbReference type="GO" id="GO:0120293">
    <property type="term" value="C:dynein axonemal particle"/>
    <property type="evidence" value="ECO:0000250"/>
    <property type="project" value="UniProtKB"/>
</dbReference>
<dbReference type="GO" id="GO:0004550">
    <property type="term" value="F:nucleoside diphosphate kinase activity"/>
    <property type="evidence" value="ECO:0007669"/>
    <property type="project" value="InterPro"/>
</dbReference>
<dbReference type="GO" id="GO:0006241">
    <property type="term" value="P:CTP biosynthetic process"/>
    <property type="evidence" value="ECO:0007669"/>
    <property type="project" value="InterPro"/>
</dbReference>
<dbReference type="GO" id="GO:0006183">
    <property type="term" value="P:GTP biosynthetic process"/>
    <property type="evidence" value="ECO:0007669"/>
    <property type="project" value="InterPro"/>
</dbReference>
<dbReference type="GO" id="GO:0006228">
    <property type="term" value="P:UTP biosynthetic process"/>
    <property type="evidence" value="ECO:0007669"/>
    <property type="project" value="InterPro"/>
</dbReference>
<dbReference type="CDD" id="cd04416">
    <property type="entry name" value="NDPk_TX"/>
    <property type="match status" value="1"/>
</dbReference>
<dbReference type="CDD" id="cd02948">
    <property type="entry name" value="TRX_NDPK"/>
    <property type="match status" value="1"/>
</dbReference>
<dbReference type="Gene3D" id="3.40.30.10">
    <property type="entry name" value="Glutaredoxin"/>
    <property type="match status" value="1"/>
</dbReference>
<dbReference type="Gene3D" id="3.30.70.141">
    <property type="entry name" value="Nucleoside diphosphate kinase-like domain"/>
    <property type="match status" value="1"/>
</dbReference>
<dbReference type="InterPro" id="IPR034907">
    <property type="entry name" value="NDK-like_dom"/>
</dbReference>
<dbReference type="InterPro" id="IPR036850">
    <property type="entry name" value="NDK-like_dom_sf"/>
</dbReference>
<dbReference type="InterPro" id="IPR001564">
    <property type="entry name" value="Nucleoside_diP_kinase"/>
</dbReference>
<dbReference type="InterPro" id="IPR036249">
    <property type="entry name" value="Thioredoxin-like_sf"/>
</dbReference>
<dbReference type="InterPro" id="IPR017937">
    <property type="entry name" value="Thioredoxin_CS"/>
</dbReference>
<dbReference type="InterPro" id="IPR013766">
    <property type="entry name" value="Thioredoxin_domain"/>
</dbReference>
<dbReference type="InterPro" id="IPR051766">
    <property type="entry name" value="TXND_domain-containing"/>
</dbReference>
<dbReference type="PANTHER" id="PTHR46135">
    <property type="entry name" value="NME/NM23 FAMILY MEMBER 8"/>
    <property type="match status" value="1"/>
</dbReference>
<dbReference type="PANTHER" id="PTHR46135:SF1">
    <property type="entry name" value="THIOREDOXIN DOMAIN-CONTAINING PROTEIN 6"/>
    <property type="match status" value="1"/>
</dbReference>
<dbReference type="Pfam" id="PF00334">
    <property type="entry name" value="NDK"/>
    <property type="match status" value="1"/>
</dbReference>
<dbReference type="Pfam" id="PF00085">
    <property type="entry name" value="Thioredoxin"/>
    <property type="match status" value="1"/>
</dbReference>
<dbReference type="PRINTS" id="PR01243">
    <property type="entry name" value="NUCDPKINASE"/>
</dbReference>
<dbReference type="SMART" id="SM00562">
    <property type="entry name" value="NDK"/>
    <property type="match status" value="1"/>
</dbReference>
<dbReference type="SUPFAM" id="SSF54919">
    <property type="entry name" value="Nucleoside diphosphate kinase, NDK"/>
    <property type="match status" value="1"/>
</dbReference>
<dbReference type="SUPFAM" id="SSF52833">
    <property type="entry name" value="Thioredoxin-like"/>
    <property type="match status" value="1"/>
</dbReference>
<dbReference type="PROSITE" id="PS51374">
    <property type="entry name" value="NDPK_LIKE"/>
    <property type="match status" value="1"/>
</dbReference>
<dbReference type="PROSITE" id="PS00194">
    <property type="entry name" value="THIOREDOXIN_1"/>
    <property type="match status" value="1"/>
</dbReference>
<gene>
    <name evidence="6" type="primary">Nme9</name>
    <name type="synonym">Txl2</name>
    <name type="synonym">Txndc6</name>
</gene>
<organism>
    <name type="scientific">Mus musculus</name>
    <name type="common">Mouse</name>
    <dbReference type="NCBI Taxonomy" id="10090"/>
    <lineage>
        <taxon>Eukaryota</taxon>
        <taxon>Metazoa</taxon>
        <taxon>Chordata</taxon>
        <taxon>Craniata</taxon>
        <taxon>Vertebrata</taxon>
        <taxon>Euteleostomi</taxon>
        <taxon>Mammalia</taxon>
        <taxon>Eutheria</taxon>
        <taxon>Euarchontoglires</taxon>
        <taxon>Glires</taxon>
        <taxon>Rodentia</taxon>
        <taxon>Myomorpha</taxon>
        <taxon>Muroidea</taxon>
        <taxon>Muridae</taxon>
        <taxon>Murinae</taxon>
        <taxon>Mus</taxon>
        <taxon>Mus</taxon>
    </lineage>
</organism>
<feature type="chain" id="PRO_0000452446" description="Thioredoxin domain-containing protein 6">
    <location>
        <begin position="1"/>
        <end position="329"/>
    </location>
</feature>
<feature type="domain" description="Thioredoxin">
    <location>
        <begin position="11"/>
        <end position="115"/>
    </location>
</feature>
<feature type="region of interest" description="NDK" evidence="2">
    <location>
        <begin position="157"/>
        <end position="303"/>
    </location>
</feature>
<feature type="region of interest" description="Disordered" evidence="3">
    <location>
        <begin position="303"/>
        <end position="329"/>
    </location>
</feature>
<name>TXND6_MOUSE</name>
<keyword id="KW-0966">Cell projection</keyword>
<keyword id="KW-0963">Cytoplasm</keyword>
<keyword id="KW-0206">Cytoskeleton</keyword>
<keyword id="KW-1185">Reference proteome</keyword>
<protein>
    <recommendedName>
        <fullName evidence="5">Thioredoxin domain-containing protein 6</fullName>
    </recommendedName>
    <alternativeName>
        <fullName>Thioredoxin-like protein 2</fullName>
        <shortName>Txl-2</shortName>
    </alternativeName>
</protein>
<sequence length="329" mass="36805">MGNRKKEIALQVNINTQELWEEMLGSKGLTVVDVYQGWCGPCKPMVSLFQKMRIEVGLDRLHFASAEADRLDVLEKYQGKCEPTFLFYTRGELVAVVKGANPTLLQKTILQQLEAEKKVPAEGGEWRAATDEELLGALKWPPHRKDGGEDGDIASSGKTCTLGIIKPDAVAHGKAEEIIMKIQEAGFDILLKEERTLTEAEMQAFYQHRAREEAFERLVHHMCSGPSHLLILTKTEGTEDVVTAWRTFLGPCDPNVARREHPESLRAQYGTEMPFNAVHGSRDREDANRELALLFPSFKFSDKDKEAPPGAEAQTMVGPVEDPCMSERI</sequence>